<feature type="chain" id="PRO_1000124405" description="Diaminopimelate epimerase">
    <location>
        <begin position="1"/>
        <end position="249"/>
    </location>
</feature>
<feature type="active site" description="Proton donor" evidence="1">
    <location>
        <position position="69"/>
    </location>
</feature>
<feature type="active site" description="Proton acceptor" evidence="1">
    <location>
        <position position="192"/>
    </location>
</feature>
<feature type="binding site" evidence="1">
    <location>
        <position position="11"/>
    </location>
    <ligand>
        <name>substrate</name>
    </ligand>
</feature>
<feature type="binding site" evidence="1">
    <location>
        <position position="60"/>
    </location>
    <ligand>
        <name>substrate</name>
    </ligand>
</feature>
<feature type="binding site" evidence="1">
    <location>
        <begin position="70"/>
        <end position="71"/>
    </location>
    <ligand>
        <name>substrate</name>
    </ligand>
</feature>
<feature type="binding site" evidence="1">
    <location>
        <position position="164"/>
    </location>
    <ligand>
        <name>substrate</name>
    </ligand>
</feature>
<feature type="binding site" evidence="1">
    <location>
        <begin position="182"/>
        <end position="183"/>
    </location>
    <ligand>
        <name>substrate</name>
    </ligand>
</feature>
<feature type="binding site" evidence="1">
    <location>
        <begin position="193"/>
        <end position="194"/>
    </location>
    <ligand>
        <name>substrate</name>
    </ligand>
</feature>
<feature type="site" description="Could be important to modulate the pK values of the two catalytic cysteine residues" evidence="1">
    <location>
        <position position="138"/>
    </location>
</feature>
<feature type="site" description="Could be important to modulate the pK values of the two catalytic cysteine residues" evidence="1">
    <location>
        <position position="182"/>
    </location>
</feature>
<sequence>MKFYKYCASGNDFVIFADSEKKDRSELAKILCNRYEGIGADGLIVIVPHDRYDFEWEFYNCDGSKANMCGNGSRAAAHFAHHHLKKSQYLNFLTGAGLIKSFVDDDIVEIKLSGIKDIKEAFEYKDRIWQGCNTGVPHIVTFVDDLSEFDINLCKEVRKKYNANVNFAKVEDDEFIRVRTYERGVEDETLACGTGMGACFYLAYLNQKVKDDILIKPKSNESLYFRLEEEQIFFRGKVKCCFEADYNFT</sequence>
<organism>
    <name type="scientific">Campylobacter lari (strain RM2100 / D67 / ATCC BAA-1060)</name>
    <dbReference type="NCBI Taxonomy" id="306263"/>
    <lineage>
        <taxon>Bacteria</taxon>
        <taxon>Pseudomonadati</taxon>
        <taxon>Campylobacterota</taxon>
        <taxon>Epsilonproteobacteria</taxon>
        <taxon>Campylobacterales</taxon>
        <taxon>Campylobacteraceae</taxon>
        <taxon>Campylobacter</taxon>
    </lineage>
</organism>
<reference key="1">
    <citation type="journal article" date="2008" name="Foodborne Pathog. Dis.">
        <title>The complete genome sequence and analysis of the human pathogen Campylobacter lari.</title>
        <authorList>
            <person name="Miller W.G."/>
            <person name="Wang G."/>
            <person name="Binnewies T.T."/>
            <person name="Parker C.T."/>
        </authorList>
    </citation>
    <scope>NUCLEOTIDE SEQUENCE [LARGE SCALE GENOMIC DNA]</scope>
    <source>
        <strain>RM2100 / D67 / ATCC BAA-1060</strain>
    </source>
</reference>
<accession>B9KED6</accession>
<evidence type="ECO:0000255" key="1">
    <source>
        <dbReference type="HAMAP-Rule" id="MF_00197"/>
    </source>
</evidence>
<dbReference type="EC" id="5.1.1.7" evidence="1"/>
<dbReference type="EMBL" id="CP000932">
    <property type="protein sequence ID" value="ACM63421.1"/>
    <property type="molecule type" value="Genomic_DNA"/>
</dbReference>
<dbReference type="RefSeq" id="WP_012660807.1">
    <property type="nucleotide sequence ID" value="NC_012039.1"/>
</dbReference>
<dbReference type="SMR" id="B9KED6"/>
<dbReference type="STRING" id="306263.Cla_0054"/>
<dbReference type="KEGG" id="cla:CLA_0054"/>
<dbReference type="PATRIC" id="fig|306263.5.peg.54"/>
<dbReference type="eggNOG" id="COG0253">
    <property type="taxonomic scope" value="Bacteria"/>
</dbReference>
<dbReference type="HOGENOM" id="CLU_053306_3_2_7"/>
<dbReference type="UniPathway" id="UPA00034">
    <property type="reaction ID" value="UER00025"/>
</dbReference>
<dbReference type="Proteomes" id="UP000007727">
    <property type="component" value="Chromosome"/>
</dbReference>
<dbReference type="GO" id="GO:0005829">
    <property type="term" value="C:cytosol"/>
    <property type="evidence" value="ECO:0007669"/>
    <property type="project" value="TreeGrafter"/>
</dbReference>
<dbReference type="GO" id="GO:0008837">
    <property type="term" value="F:diaminopimelate epimerase activity"/>
    <property type="evidence" value="ECO:0007669"/>
    <property type="project" value="UniProtKB-UniRule"/>
</dbReference>
<dbReference type="GO" id="GO:0009089">
    <property type="term" value="P:lysine biosynthetic process via diaminopimelate"/>
    <property type="evidence" value="ECO:0007669"/>
    <property type="project" value="UniProtKB-UniRule"/>
</dbReference>
<dbReference type="Gene3D" id="3.10.310.10">
    <property type="entry name" value="Diaminopimelate Epimerase, Chain A, domain 1"/>
    <property type="match status" value="2"/>
</dbReference>
<dbReference type="HAMAP" id="MF_00197">
    <property type="entry name" value="DAP_epimerase"/>
    <property type="match status" value="1"/>
</dbReference>
<dbReference type="InterPro" id="IPR018510">
    <property type="entry name" value="DAP_epimerase_AS"/>
</dbReference>
<dbReference type="InterPro" id="IPR001653">
    <property type="entry name" value="DAP_epimerase_DapF"/>
</dbReference>
<dbReference type="NCBIfam" id="TIGR00652">
    <property type="entry name" value="DapF"/>
    <property type="match status" value="1"/>
</dbReference>
<dbReference type="PANTHER" id="PTHR31689:SF0">
    <property type="entry name" value="DIAMINOPIMELATE EPIMERASE"/>
    <property type="match status" value="1"/>
</dbReference>
<dbReference type="PANTHER" id="PTHR31689">
    <property type="entry name" value="DIAMINOPIMELATE EPIMERASE, CHLOROPLASTIC"/>
    <property type="match status" value="1"/>
</dbReference>
<dbReference type="Pfam" id="PF01678">
    <property type="entry name" value="DAP_epimerase"/>
    <property type="match status" value="2"/>
</dbReference>
<dbReference type="SUPFAM" id="SSF54506">
    <property type="entry name" value="Diaminopimelate epimerase-like"/>
    <property type="match status" value="2"/>
</dbReference>
<dbReference type="PROSITE" id="PS01326">
    <property type="entry name" value="DAP_EPIMERASE"/>
    <property type="match status" value="1"/>
</dbReference>
<protein>
    <recommendedName>
        <fullName evidence="1">Diaminopimelate epimerase</fullName>
        <shortName evidence="1">DAP epimerase</shortName>
        <ecNumber evidence="1">5.1.1.7</ecNumber>
    </recommendedName>
    <alternativeName>
        <fullName evidence="1">PLP-independent amino acid racemase</fullName>
    </alternativeName>
</protein>
<proteinExistence type="inferred from homology"/>
<keyword id="KW-0028">Amino-acid biosynthesis</keyword>
<keyword id="KW-0963">Cytoplasm</keyword>
<keyword id="KW-0413">Isomerase</keyword>
<keyword id="KW-0457">Lysine biosynthesis</keyword>
<keyword id="KW-1185">Reference proteome</keyword>
<comment type="function">
    <text evidence="1">Catalyzes the stereoinversion of LL-2,6-diaminopimelate (L,L-DAP) to meso-diaminopimelate (meso-DAP), a precursor of L-lysine and an essential component of the bacterial peptidoglycan.</text>
</comment>
<comment type="catalytic activity">
    <reaction evidence="1">
        <text>(2S,6S)-2,6-diaminopimelate = meso-2,6-diaminopimelate</text>
        <dbReference type="Rhea" id="RHEA:15393"/>
        <dbReference type="ChEBI" id="CHEBI:57609"/>
        <dbReference type="ChEBI" id="CHEBI:57791"/>
        <dbReference type="EC" id="5.1.1.7"/>
    </reaction>
</comment>
<comment type="pathway">
    <text evidence="1">Amino-acid biosynthesis; L-lysine biosynthesis via DAP pathway; DL-2,6-diaminopimelate from LL-2,6-diaminopimelate: step 1/1.</text>
</comment>
<comment type="subunit">
    <text evidence="1">Homodimer.</text>
</comment>
<comment type="subcellular location">
    <subcellularLocation>
        <location evidence="1">Cytoplasm</location>
    </subcellularLocation>
</comment>
<comment type="similarity">
    <text evidence="1">Belongs to the diaminopimelate epimerase family.</text>
</comment>
<gene>
    <name evidence="1" type="primary">dapF</name>
    <name type="ordered locus">Cla_0054</name>
</gene>
<name>DAPF_CAMLR</name>